<comment type="function">
    <text evidence="1">This protein is one of the early assembly proteins of the 50S ribosomal subunit, although it is not seen to bind rRNA by itself. It is important during the early stages of 50S assembly.</text>
</comment>
<comment type="subunit">
    <text evidence="1">Part of the 50S ribosomal subunit.</text>
</comment>
<comment type="similarity">
    <text evidence="1">Belongs to the universal ribosomal protein uL13 family.</text>
</comment>
<accession>Q2JL71</accession>
<proteinExistence type="inferred from homology"/>
<organism>
    <name type="scientific">Synechococcus sp. (strain JA-2-3B'a(2-13))</name>
    <name type="common">Cyanobacteria bacterium Yellowstone B-Prime</name>
    <dbReference type="NCBI Taxonomy" id="321332"/>
    <lineage>
        <taxon>Bacteria</taxon>
        <taxon>Bacillati</taxon>
        <taxon>Cyanobacteriota</taxon>
        <taxon>Cyanophyceae</taxon>
        <taxon>Synechococcales</taxon>
        <taxon>Synechococcaceae</taxon>
        <taxon>Synechococcus</taxon>
    </lineage>
</organism>
<sequence>MNKTPLPNPETLAPRWYLVDAANQRLGRLAAAVATLLRGKHKPDFTPHLDTGDYVIVINAEKVVVTGKKRTQKLYRRHSGRPGGMKVETFAQLQARLPERVVEKAVKGMLPHTRLGRRQFTKLKVYVGPNHPHEAQQPQVYPLNTIPGAKA</sequence>
<dbReference type="EMBL" id="CP000240">
    <property type="protein sequence ID" value="ABD02547.1"/>
    <property type="molecule type" value="Genomic_DNA"/>
</dbReference>
<dbReference type="RefSeq" id="WP_011433193.1">
    <property type="nucleotide sequence ID" value="NC_007776.1"/>
</dbReference>
<dbReference type="SMR" id="Q2JL71"/>
<dbReference type="STRING" id="321332.CYB_1583"/>
<dbReference type="KEGG" id="cyb:CYB_1583"/>
<dbReference type="eggNOG" id="COG0102">
    <property type="taxonomic scope" value="Bacteria"/>
</dbReference>
<dbReference type="HOGENOM" id="CLU_082184_2_2_3"/>
<dbReference type="OrthoDB" id="9801330at2"/>
<dbReference type="Proteomes" id="UP000001938">
    <property type="component" value="Chromosome"/>
</dbReference>
<dbReference type="GO" id="GO:0022625">
    <property type="term" value="C:cytosolic large ribosomal subunit"/>
    <property type="evidence" value="ECO:0007669"/>
    <property type="project" value="TreeGrafter"/>
</dbReference>
<dbReference type="GO" id="GO:0003729">
    <property type="term" value="F:mRNA binding"/>
    <property type="evidence" value="ECO:0007669"/>
    <property type="project" value="TreeGrafter"/>
</dbReference>
<dbReference type="GO" id="GO:0003735">
    <property type="term" value="F:structural constituent of ribosome"/>
    <property type="evidence" value="ECO:0007669"/>
    <property type="project" value="InterPro"/>
</dbReference>
<dbReference type="GO" id="GO:0017148">
    <property type="term" value="P:negative regulation of translation"/>
    <property type="evidence" value="ECO:0007669"/>
    <property type="project" value="TreeGrafter"/>
</dbReference>
<dbReference type="GO" id="GO:0006412">
    <property type="term" value="P:translation"/>
    <property type="evidence" value="ECO:0007669"/>
    <property type="project" value="UniProtKB-UniRule"/>
</dbReference>
<dbReference type="CDD" id="cd00392">
    <property type="entry name" value="Ribosomal_L13"/>
    <property type="match status" value="1"/>
</dbReference>
<dbReference type="FunFam" id="3.90.1180.10:FF:000001">
    <property type="entry name" value="50S ribosomal protein L13"/>
    <property type="match status" value="1"/>
</dbReference>
<dbReference type="Gene3D" id="3.90.1180.10">
    <property type="entry name" value="Ribosomal protein L13"/>
    <property type="match status" value="1"/>
</dbReference>
<dbReference type="HAMAP" id="MF_01366">
    <property type="entry name" value="Ribosomal_uL13"/>
    <property type="match status" value="1"/>
</dbReference>
<dbReference type="InterPro" id="IPR005822">
    <property type="entry name" value="Ribosomal_uL13"/>
</dbReference>
<dbReference type="InterPro" id="IPR005823">
    <property type="entry name" value="Ribosomal_uL13_bac-type"/>
</dbReference>
<dbReference type="InterPro" id="IPR023563">
    <property type="entry name" value="Ribosomal_uL13_CS"/>
</dbReference>
<dbReference type="InterPro" id="IPR036899">
    <property type="entry name" value="Ribosomal_uL13_sf"/>
</dbReference>
<dbReference type="NCBIfam" id="TIGR01066">
    <property type="entry name" value="rplM_bact"/>
    <property type="match status" value="1"/>
</dbReference>
<dbReference type="PANTHER" id="PTHR11545:SF2">
    <property type="entry name" value="LARGE RIBOSOMAL SUBUNIT PROTEIN UL13M"/>
    <property type="match status" value="1"/>
</dbReference>
<dbReference type="PANTHER" id="PTHR11545">
    <property type="entry name" value="RIBOSOMAL PROTEIN L13"/>
    <property type="match status" value="1"/>
</dbReference>
<dbReference type="Pfam" id="PF00572">
    <property type="entry name" value="Ribosomal_L13"/>
    <property type="match status" value="1"/>
</dbReference>
<dbReference type="PIRSF" id="PIRSF002181">
    <property type="entry name" value="Ribosomal_L13"/>
    <property type="match status" value="1"/>
</dbReference>
<dbReference type="SUPFAM" id="SSF52161">
    <property type="entry name" value="Ribosomal protein L13"/>
    <property type="match status" value="1"/>
</dbReference>
<dbReference type="PROSITE" id="PS00783">
    <property type="entry name" value="RIBOSOMAL_L13"/>
    <property type="match status" value="1"/>
</dbReference>
<name>RL13_SYNJB</name>
<protein>
    <recommendedName>
        <fullName evidence="1">Large ribosomal subunit protein uL13</fullName>
    </recommendedName>
    <alternativeName>
        <fullName evidence="2">50S ribosomal protein L13</fullName>
    </alternativeName>
</protein>
<keyword id="KW-1185">Reference proteome</keyword>
<keyword id="KW-0687">Ribonucleoprotein</keyword>
<keyword id="KW-0689">Ribosomal protein</keyword>
<gene>
    <name evidence="1" type="primary">rplM</name>
    <name evidence="1" type="synonym">rpl13</name>
    <name type="ordered locus">CYB_1583</name>
</gene>
<evidence type="ECO:0000255" key="1">
    <source>
        <dbReference type="HAMAP-Rule" id="MF_01366"/>
    </source>
</evidence>
<evidence type="ECO:0000305" key="2"/>
<reference key="1">
    <citation type="journal article" date="2007" name="ISME J.">
        <title>Population level functional diversity in a microbial community revealed by comparative genomic and metagenomic analyses.</title>
        <authorList>
            <person name="Bhaya D."/>
            <person name="Grossman A.R."/>
            <person name="Steunou A.-S."/>
            <person name="Khuri N."/>
            <person name="Cohan F.M."/>
            <person name="Hamamura N."/>
            <person name="Melendrez M.C."/>
            <person name="Bateson M.M."/>
            <person name="Ward D.M."/>
            <person name="Heidelberg J.F."/>
        </authorList>
    </citation>
    <scope>NUCLEOTIDE SEQUENCE [LARGE SCALE GENOMIC DNA]</scope>
    <source>
        <strain>JA-2-3B'a(2-13)</strain>
    </source>
</reference>
<feature type="chain" id="PRO_1000055481" description="Large ribosomal subunit protein uL13">
    <location>
        <begin position="1"/>
        <end position="151"/>
    </location>
</feature>